<sequence length="111" mass="12228">MEKNNTTKPRKIGPYFLSKVTITYWLDGCVFLSVPASEISISNIAGSIPSINCWVISTGKPLSLEILADALSKSSSWAPDLKLQEWQIISSYQYKLLFVPQCGQVLSKGST</sequence>
<proteinExistence type="uncertain"/>
<accession>P53126</accession>
<evidence type="ECO:0000305" key="1"/>
<evidence type="ECO:0000305" key="2">
    <source>
    </source>
</evidence>
<protein>
    <recommendedName>
        <fullName>Putative uncharacterized protein YGL132W</fullName>
    </recommendedName>
</protein>
<gene>
    <name type="ordered locus">YGL132W</name>
    <name type="ORF">G2847</name>
</gene>
<reference key="1">
    <citation type="journal article" date="1996" name="Yeast">
        <title>Sequence analysis of a 14.6 kb DNA fragment of Saccharomyces cerevisiae chromosome VII reveals SEC27, SSM1b, a putative S-adenosylmethionine-dependent enzyme and six new open reading frames.</title>
        <authorList>
            <person name="Escribano V."/>
            <person name="Eraso P."/>
            <person name="Portillo F."/>
            <person name="Mazon M.J."/>
        </authorList>
    </citation>
    <scope>NUCLEOTIDE SEQUENCE [GENOMIC DNA]</scope>
    <source>
        <strain>ATCC 96604 / S288c / FY1679</strain>
    </source>
</reference>
<reference key="2">
    <citation type="journal article" date="1997" name="Nature">
        <title>The nucleotide sequence of Saccharomyces cerevisiae chromosome VII.</title>
        <authorList>
            <person name="Tettelin H."/>
            <person name="Agostoni-Carbone M.L."/>
            <person name="Albermann K."/>
            <person name="Albers M."/>
            <person name="Arroyo J."/>
            <person name="Backes U."/>
            <person name="Barreiros T."/>
            <person name="Bertani I."/>
            <person name="Bjourson A.J."/>
            <person name="Brueckner M."/>
            <person name="Bruschi C.V."/>
            <person name="Carignani G."/>
            <person name="Castagnoli L."/>
            <person name="Cerdan E."/>
            <person name="Clemente M.L."/>
            <person name="Coblenz A."/>
            <person name="Coglievina M."/>
            <person name="Coissac E."/>
            <person name="Defoor E."/>
            <person name="Del Bino S."/>
            <person name="Delius H."/>
            <person name="Delneri D."/>
            <person name="de Wergifosse P."/>
            <person name="Dujon B."/>
            <person name="Durand P."/>
            <person name="Entian K.-D."/>
            <person name="Eraso P."/>
            <person name="Escribano V."/>
            <person name="Fabiani L."/>
            <person name="Fartmann B."/>
            <person name="Feroli F."/>
            <person name="Feuermann M."/>
            <person name="Frontali L."/>
            <person name="Garcia-Gonzalez M."/>
            <person name="Garcia-Saez M.I."/>
            <person name="Goffeau A."/>
            <person name="Guerreiro P."/>
            <person name="Hani J."/>
            <person name="Hansen M."/>
            <person name="Hebling U."/>
            <person name="Hernandez K."/>
            <person name="Heumann K."/>
            <person name="Hilger F."/>
            <person name="Hofmann B."/>
            <person name="Indge K.J."/>
            <person name="James C.M."/>
            <person name="Klima R."/>
            <person name="Koetter P."/>
            <person name="Kramer B."/>
            <person name="Kramer W."/>
            <person name="Lauquin G."/>
            <person name="Leuther H."/>
            <person name="Louis E.J."/>
            <person name="Maillier E."/>
            <person name="Marconi A."/>
            <person name="Martegani E."/>
            <person name="Mazon M.J."/>
            <person name="Mazzoni C."/>
            <person name="McReynolds A.D.K."/>
            <person name="Melchioretto P."/>
            <person name="Mewes H.-W."/>
            <person name="Minenkova O."/>
            <person name="Mueller-Auer S."/>
            <person name="Nawrocki A."/>
            <person name="Netter P."/>
            <person name="Neu R."/>
            <person name="Nombela C."/>
            <person name="Oliver S.G."/>
            <person name="Panzeri L."/>
            <person name="Paoluzi S."/>
            <person name="Plevani P."/>
            <person name="Portetelle D."/>
            <person name="Portillo F."/>
            <person name="Potier S."/>
            <person name="Purnelle B."/>
            <person name="Rieger M."/>
            <person name="Riles L."/>
            <person name="Rinaldi T."/>
            <person name="Robben J."/>
            <person name="Rodrigues-Pousada C."/>
            <person name="Rodriguez-Belmonte E."/>
            <person name="Rodriguez-Torres A.M."/>
            <person name="Rose M."/>
            <person name="Ruzzi M."/>
            <person name="Saliola M."/>
            <person name="Sanchez-Perez M."/>
            <person name="Schaefer B."/>
            <person name="Schaefer M."/>
            <person name="Scharfe M."/>
            <person name="Schmidheini T."/>
            <person name="Schreer A."/>
            <person name="Skala J."/>
            <person name="Souciet J.-L."/>
            <person name="Steensma H.Y."/>
            <person name="Talla E."/>
            <person name="Thierry A."/>
            <person name="Vandenbol M."/>
            <person name="van der Aart Q.J.M."/>
            <person name="Van Dyck L."/>
            <person name="Vanoni M."/>
            <person name="Verhasselt P."/>
            <person name="Voet M."/>
            <person name="Volckaert G."/>
            <person name="Wambutt R."/>
            <person name="Watson M.D."/>
            <person name="Weber N."/>
            <person name="Wedler E."/>
            <person name="Wedler H."/>
            <person name="Wipfli P."/>
            <person name="Wolf K."/>
            <person name="Wright L.F."/>
            <person name="Zaccaria P."/>
            <person name="Zimmermann M."/>
            <person name="Zollner A."/>
            <person name="Kleine K."/>
        </authorList>
    </citation>
    <scope>NUCLEOTIDE SEQUENCE [LARGE SCALE GENOMIC DNA]</scope>
    <source>
        <strain>ATCC 204508 / S288c</strain>
    </source>
</reference>
<reference key="3">
    <citation type="journal article" date="2014" name="G3 (Bethesda)">
        <title>The reference genome sequence of Saccharomyces cerevisiae: Then and now.</title>
        <authorList>
            <person name="Engel S.R."/>
            <person name="Dietrich F.S."/>
            <person name="Fisk D.G."/>
            <person name="Binkley G."/>
            <person name="Balakrishnan R."/>
            <person name="Costanzo M.C."/>
            <person name="Dwight S.S."/>
            <person name="Hitz B.C."/>
            <person name="Karra K."/>
            <person name="Nash R.S."/>
            <person name="Weng S."/>
            <person name="Wong E.D."/>
            <person name="Lloyd P."/>
            <person name="Skrzypek M.S."/>
            <person name="Miyasato S.R."/>
            <person name="Simison M."/>
            <person name="Cherry J.M."/>
        </authorList>
    </citation>
    <scope>GENOME REANNOTATION</scope>
    <source>
        <strain>ATCC 204508 / S288c</strain>
    </source>
</reference>
<comment type="miscellaneous">
    <text evidence="1">Partially overlaps SNT2.</text>
</comment>
<comment type="caution">
    <text evidence="2">Product of a dubious gene prediction unlikely to encode a functional protein. Because of that it is not part of the S.cerevisiae S288c complete/reference proteome set.</text>
</comment>
<dbReference type="EMBL" id="Z72654">
    <property type="protein sequence ID" value="CAA96842.1"/>
    <property type="molecule type" value="Genomic_DNA"/>
</dbReference>
<dbReference type="EMBL" id="Z72652">
    <property type="protein sequence ID" value="CAA96840.1"/>
    <property type="molecule type" value="Genomic_DNA"/>
</dbReference>
<dbReference type="PIR" id="S64145">
    <property type="entry name" value="S64145"/>
</dbReference>
<dbReference type="DIP" id="DIP-4173N"/>
<dbReference type="PaxDb" id="4932-YGL132W"/>
<dbReference type="TopDownProteomics" id="P53126"/>
<dbReference type="EnsemblFungi" id="YGL132W_mRNA">
    <property type="protein sequence ID" value="YGL132W"/>
    <property type="gene ID" value="YGL132W"/>
</dbReference>
<dbReference type="AGR" id="SGD:S000003100"/>
<dbReference type="SGD" id="S000003100">
    <property type="gene designation" value="YGL132W"/>
</dbReference>
<dbReference type="HOGENOM" id="CLU_2160373_0_0_1"/>
<feature type="chain" id="PRO_0000202741" description="Putative uncharacterized protein YGL132W">
    <location>
        <begin position="1"/>
        <end position="111"/>
    </location>
</feature>
<organism>
    <name type="scientific">Saccharomyces cerevisiae (strain ATCC 204508 / S288c)</name>
    <name type="common">Baker's yeast</name>
    <dbReference type="NCBI Taxonomy" id="559292"/>
    <lineage>
        <taxon>Eukaryota</taxon>
        <taxon>Fungi</taxon>
        <taxon>Dikarya</taxon>
        <taxon>Ascomycota</taxon>
        <taxon>Saccharomycotina</taxon>
        <taxon>Saccharomycetes</taxon>
        <taxon>Saccharomycetales</taxon>
        <taxon>Saccharomycetaceae</taxon>
        <taxon>Saccharomyces</taxon>
    </lineage>
</organism>
<name>YGN2_YEAST</name>